<accession>Q0SFF3</accession>
<proteinExistence type="inferred from homology"/>
<feature type="chain" id="PRO_0000263491" description="Elongation factor G">
    <location>
        <begin position="1"/>
        <end position="700"/>
    </location>
</feature>
<feature type="domain" description="tr-type G">
    <location>
        <begin position="10"/>
        <end position="286"/>
    </location>
</feature>
<feature type="binding site" evidence="1">
    <location>
        <begin position="19"/>
        <end position="26"/>
    </location>
    <ligand>
        <name>GTP</name>
        <dbReference type="ChEBI" id="CHEBI:37565"/>
    </ligand>
</feature>
<feature type="binding site" evidence="1">
    <location>
        <begin position="83"/>
        <end position="87"/>
    </location>
    <ligand>
        <name>GTP</name>
        <dbReference type="ChEBI" id="CHEBI:37565"/>
    </ligand>
</feature>
<feature type="binding site" evidence="1">
    <location>
        <begin position="137"/>
        <end position="140"/>
    </location>
    <ligand>
        <name>GTP</name>
        <dbReference type="ChEBI" id="CHEBI:37565"/>
    </ligand>
</feature>
<comment type="function">
    <text evidence="1">Catalyzes the GTP-dependent ribosomal translocation step during translation elongation. During this step, the ribosome changes from the pre-translocational (PRE) to the post-translocational (POST) state as the newly formed A-site-bound peptidyl-tRNA and P-site-bound deacylated tRNA move to the P and E sites, respectively. Catalyzes the coordinated movement of the two tRNA molecules, the mRNA and conformational changes in the ribosome.</text>
</comment>
<comment type="subcellular location">
    <subcellularLocation>
        <location evidence="1">Cytoplasm</location>
    </subcellularLocation>
</comment>
<comment type="similarity">
    <text evidence="1">Belongs to the TRAFAC class translation factor GTPase superfamily. Classic translation factor GTPase family. EF-G/EF-2 subfamily.</text>
</comment>
<organism>
    <name type="scientific">Rhodococcus jostii (strain RHA1)</name>
    <dbReference type="NCBI Taxonomy" id="101510"/>
    <lineage>
        <taxon>Bacteria</taxon>
        <taxon>Bacillati</taxon>
        <taxon>Actinomycetota</taxon>
        <taxon>Actinomycetes</taxon>
        <taxon>Mycobacteriales</taxon>
        <taxon>Nocardiaceae</taxon>
        <taxon>Rhodococcus</taxon>
    </lineage>
</organism>
<dbReference type="EMBL" id="CP000431">
    <property type="protein sequence ID" value="ABG93733.1"/>
    <property type="molecule type" value="Genomic_DNA"/>
</dbReference>
<dbReference type="RefSeq" id="WP_009474623.1">
    <property type="nucleotide sequence ID" value="NC_008268.1"/>
</dbReference>
<dbReference type="SMR" id="Q0SFF3"/>
<dbReference type="KEGG" id="rha:RHA1_ro01922"/>
<dbReference type="eggNOG" id="COG0480">
    <property type="taxonomic scope" value="Bacteria"/>
</dbReference>
<dbReference type="HOGENOM" id="CLU_002794_4_1_11"/>
<dbReference type="OrthoDB" id="9801472at2"/>
<dbReference type="Proteomes" id="UP000008710">
    <property type="component" value="Chromosome"/>
</dbReference>
<dbReference type="GO" id="GO:0005737">
    <property type="term" value="C:cytoplasm"/>
    <property type="evidence" value="ECO:0007669"/>
    <property type="project" value="UniProtKB-SubCell"/>
</dbReference>
<dbReference type="GO" id="GO:0005525">
    <property type="term" value="F:GTP binding"/>
    <property type="evidence" value="ECO:0007669"/>
    <property type="project" value="UniProtKB-UniRule"/>
</dbReference>
<dbReference type="GO" id="GO:0003924">
    <property type="term" value="F:GTPase activity"/>
    <property type="evidence" value="ECO:0007669"/>
    <property type="project" value="InterPro"/>
</dbReference>
<dbReference type="GO" id="GO:0003746">
    <property type="term" value="F:translation elongation factor activity"/>
    <property type="evidence" value="ECO:0007669"/>
    <property type="project" value="UniProtKB-UniRule"/>
</dbReference>
<dbReference type="GO" id="GO:0032790">
    <property type="term" value="P:ribosome disassembly"/>
    <property type="evidence" value="ECO:0007669"/>
    <property type="project" value="TreeGrafter"/>
</dbReference>
<dbReference type="CDD" id="cd01886">
    <property type="entry name" value="EF-G"/>
    <property type="match status" value="1"/>
</dbReference>
<dbReference type="CDD" id="cd16262">
    <property type="entry name" value="EFG_III"/>
    <property type="match status" value="1"/>
</dbReference>
<dbReference type="CDD" id="cd01434">
    <property type="entry name" value="EFG_mtEFG1_IV"/>
    <property type="match status" value="1"/>
</dbReference>
<dbReference type="CDD" id="cd03713">
    <property type="entry name" value="EFG_mtEFG_C"/>
    <property type="match status" value="1"/>
</dbReference>
<dbReference type="CDD" id="cd04088">
    <property type="entry name" value="EFG_mtEFG_II"/>
    <property type="match status" value="1"/>
</dbReference>
<dbReference type="FunFam" id="2.40.30.10:FF:000006">
    <property type="entry name" value="Elongation factor G"/>
    <property type="match status" value="1"/>
</dbReference>
<dbReference type="FunFam" id="3.30.230.10:FF:000003">
    <property type="entry name" value="Elongation factor G"/>
    <property type="match status" value="1"/>
</dbReference>
<dbReference type="FunFam" id="3.30.70.240:FF:000001">
    <property type="entry name" value="Elongation factor G"/>
    <property type="match status" value="1"/>
</dbReference>
<dbReference type="FunFam" id="3.30.70.870:FF:000001">
    <property type="entry name" value="Elongation factor G"/>
    <property type="match status" value="1"/>
</dbReference>
<dbReference type="FunFam" id="3.40.50.300:FF:000029">
    <property type="entry name" value="Elongation factor G"/>
    <property type="match status" value="1"/>
</dbReference>
<dbReference type="Gene3D" id="3.30.230.10">
    <property type="match status" value="1"/>
</dbReference>
<dbReference type="Gene3D" id="3.30.70.240">
    <property type="match status" value="1"/>
</dbReference>
<dbReference type="Gene3D" id="3.30.70.870">
    <property type="entry name" value="Elongation Factor G (Translational Gtpase), domain 3"/>
    <property type="match status" value="1"/>
</dbReference>
<dbReference type="Gene3D" id="3.40.50.300">
    <property type="entry name" value="P-loop containing nucleotide triphosphate hydrolases"/>
    <property type="match status" value="1"/>
</dbReference>
<dbReference type="Gene3D" id="2.40.30.10">
    <property type="entry name" value="Translation factors"/>
    <property type="match status" value="1"/>
</dbReference>
<dbReference type="HAMAP" id="MF_00054_B">
    <property type="entry name" value="EF_G_EF_2_B"/>
    <property type="match status" value="1"/>
</dbReference>
<dbReference type="InterPro" id="IPR041095">
    <property type="entry name" value="EFG_II"/>
</dbReference>
<dbReference type="InterPro" id="IPR009022">
    <property type="entry name" value="EFG_III"/>
</dbReference>
<dbReference type="InterPro" id="IPR035647">
    <property type="entry name" value="EFG_III/V"/>
</dbReference>
<dbReference type="InterPro" id="IPR047872">
    <property type="entry name" value="EFG_IV"/>
</dbReference>
<dbReference type="InterPro" id="IPR035649">
    <property type="entry name" value="EFG_V"/>
</dbReference>
<dbReference type="InterPro" id="IPR000640">
    <property type="entry name" value="EFG_V-like"/>
</dbReference>
<dbReference type="InterPro" id="IPR004161">
    <property type="entry name" value="EFTu-like_2"/>
</dbReference>
<dbReference type="InterPro" id="IPR031157">
    <property type="entry name" value="G_TR_CS"/>
</dbReference>
<dbReference type="InterPro" id="IPR027417">
    <property type="entry name" value="P-loop_NTPase"/>
</dbReference>
<dbReference type="InterPro" id="IPR020568">
    <property type="entry name" value="Ribosomal_Su5_D2-typ_SF"/>
</dbReference>
<dbReference type="InterPro" id="IPR014721">
    <property type="entry name" value="Ribsml_uS5_D2-typ_fold_subgr"/>
</dbReference>
<dbReference type="InterPro" id="IPR005225">
    <property type="entry name" value="Small_GTP-bd"/>
</dbReference>
<dbReference type="InterPro" id="IPR000795">
    <property type="entry name" value="T_Tr_GTP-bd_dom"/>
</dbReference>
<dbReference type="InterPro" id="IPR009000">
    <property type="entry name" value="Transl_B-barrel_sf"/>
</dbReference>
<dbReference type="InterPro" id="IPR004540">
    <property type="entry name" value="Transl_elong_EFG/EF2"/>
</dbReference>
<dbReference type="InterPro" id="IPR005517">
    <property type="entry name" value="Transl_elong_EFG/EF2_IV"/>
</dbReference>
<dbReference type="NCBIfam" id="TIGR00484">
    <property type="entry name" value="EF-G"/>
    <property type="match status" value="1"/>
</dbReference>
<dbReference type="NCBIfam" id="NF009381">
    <property type="entry name" value="PRK12740.1-5"/>
    <property type="match status" value="1"/>
</dbReference>
<dbReference type="NCBIfam" id="TIGR00231">
    <property type="entry name" value="small_GTP"/>
    <property type="match status" value="1"/>
</dbReference>
<dbReference type="PANTHER" id="PTHR43261:SF1">
    <property type="entry name" value="RIBOSOME-RELEASING FACTOR 2, MITOCHONDRIAL"/>
    <property type="match status" value="1"/>
</dbReference>
<dbReference type="PANTHER" id="PTHR43261">
    <property type="entry name" value="TRANSLATION ELONGATION FACTOR G-RELATED"/>
    <property type="match status" value="1"/>
</dbReference>
<dbReference type="Pfam" id="PF00679">
    <property type="entry name" value="EFG_C"/>
    <property type="match status" value="1"/>
</dbReference>
<dbReference type="Pfam" id="PF14492">
    <property type="entry name" value="EFG_III"/>
    <property type="match status" value="1"/>
</dbReference>
<dbReference type="Pfam" id="PF03764">
    <property type="entry name" value="EFG_IV"/>
    <property type="match status" value="1"/>
</dbReference>
<dbReference type="Pfam" id="PF00009">
    <property type="entry name" value="GTP_EFTU"/>
    <property type="match status" value="1"/>
</dbReference>
<dbReference type="Pfam" id="PF03144">
    <property type="entry name" value="GTP_EFTU_D2"/>
    <property type="match status" value="1"/>
</dbReference>
<dbReference type="PRINTS" id="PR00315">
    <property type="entry name" value="ELONGATNFCT"/>
</dbReference>
<dbReference type="SMART" id="SM00838">
    <property type="entry name" value="EFG_C"/>
    <property type="match status" value="1"/>
</dbReference>
<dbReference type="SMART" id="SM00889">
    <property type="entry name" value="EFG_IV"/>
    <property type="match status" value="1"/>
</dbReference>
<dbReference type="SUPFAM" id="SSF54980">
    <property type="entry name" value="EF-G C-terminal domain-like"/>
    <property type="match status" value="2"/>
</dbReference>
<dbReference type="SUPFAM" id="SSF52540">
    <property type="entry name" value="P-loop containing nucleoside triphosphate hydrolases"/>
    <property type="match status" value="1"/>
</dbReference>
<dbReference type="SUPFAM" id="SSF54211">
    <property type="entry name" value="Ribosomal protein S5 domain 2-like"/>
    <property type="match status" value="1"/>
</dbReference>
<dbReference type="SUPFAM" id="SSF50447">
    <property type="entry name" value="Translation proteins"/>
    <property type="match status" value="1"/>
</dbReference>
<dbReference type="PROSITE" id="PS00301">
    <property type="entry name" value="G_TR_1"/>
    <property type="match status" value="1"/>
</dbReference>
<dbReference type="PROSITE" id="PS51722">
    <property type="entry name" value="G_TR_2"/>
    <property type="match status" value="1"/>
</dbReference>
<sequence>MAQEVLTDLNKVRNIGIMAHIDAGKTTTTERILFYTGVNYKIGETHDGASTTDWMEQEKERGITITSAAVTCFWNNNQINIIDTPGHVDFTVEVERSLRVLDGAVAVFDGKEGVEPQSEQVWRQAAKYDVPRICFVNKMDKMGADFYFTVQTIIDRLGAKPLVLQLPIGAEDDFDGVVDLVEMKAVTWRGTVAIGAEPTIEEIPADLADKAAEYREKLLETVAESDEKLMEKYFAGEELSVEEIKGAIRKMTVNSELYPVLCGSAFKNKGVQPMLDAVIDYLPNPLDIGEVQGHALGNEEEILTRKPSKDEPFSALAFKIASHPFFGKLTFVRVYSGRIDPGAQVMNATKGKKERIGKLFQMHANKENPVDEAVAGHIYAMIGLKDTTTGDTLCAQDAPIVLESMSFPDPVIQVSIEPKTKSDQEKLGTAIQKLAEEDPTFSVELDEETGQTVIGGMGELHLDILVDRMRREFKVEANVGKPQVAYRETITKKVEKHDYTHKKQTGGSGQFAKVIIALEPFVGEDGATYEFENKVSGGRIPREYIPSVDAGAQDAMQYGVLAGYPLVNLKLSLLDGAYHDVDSSEMAFKVAGSQALKEAARKAGPVILEPLMAVEVTTPEEYMGDVIGDLNSRRGQIQAMEERSGARVVKALVPLSEMFGYIGDLRSKTQGRANFSMVFDSYAEVPANVSKEIIAKATGE</sequence>
<name>EFG_RHOJR</name>
<evidence type="ECO:0000255" key="1">
    <source>
        <dbReference type="HAMAP-Rule" id="MF_00054"/>
    </source>
</evidence>
<protein>
    <recommendedName>
        <fullName evidence="1">Elongation factor G</fullName>
        <shortName evidence="1">EF-G</shortName>
    </recommendedName>
</protein>
<reference key="1">
    <citation type="journal article" date="2006" name="Proc. Natl. Acad. Sci. U.S.A.">
        <title>The complete genome of Rhodococcus sp. RHA1 provides insights into a catabolic powerhouse.</title>
        <authorList>
            <person name="McLeod M.P."/>
            <person name="Warren R.L."/>
            <person name="Hsiao W.W.L."/>
            <person name="Araki N."/>
            <person name="Myhre M."/>
            <person name="Fernandes C."/>
            <person name="Miyazawa D."/>
            <person name="Wong W."/>
            <person name="Lillquist A.L."/>
            <person name="Wang D."/>
            <person name="Dosanjh M."/>
            <person name="Hara H."/>
            <person name="Petrescu A."/>
            <person name="Morin R.D."/>
            <person name="Yang G."/>
            <person name="Stott J.M."/>
            <person name="Schein J.E."/>
            <person name="Shin H."/>
            <person name="Smailus D."/>
            <person name="Siddiqui A.S."/>
            <person name="Marra M.A."/>
            <person name="Jones S.J.M."/>
            <person name="Holt R."/>
            <person name="Brinkman F.S.L."/>
            <person name="Miyauchi K."/>
            <person name="Fukuda M."/>
            <person name="Davies J.E."/>
            <person name="Mohn W.W."/>
            <person name="Eltis L.D."/>
        </authorList>
    </citation>
    <scope>NUCLEOTIDE SEQUENCE [LARGE SCALE GENOMIC DNA]</scope>
    <source>
        <strain>RHA1</strain>
    </source>
</reference>
<keyword id="KW-0963">Cytoplasm</keyword>
<keyword id="KW-0251">Elongation factor</keyword>
<keyword id="KW-0342">GTP-binding</keyword>
<keyword id="KW-0547">Nucleotide-binding</keyword>
<keyword id="KW-0648">Protein biosynthesis</keyword>
<gene>
    <name evidence="1" type="primary">fusA</name>
    <name type="ordered locus">RHA1_ro01922</name>
</gene>